<organism>
    <name type="scientific">Daucus carota</name>
    <name type="common">Wild carrot</name>
    <dbReference type="NCBI Taxonomy" id="4039"/>
    <lineage>
        <taxon>Eukaryota</taxon>
        <taxon>Viridiplantae</taxon>
        <taxon>Streptophyta</taxon>
        <taxon>Embryophyta</taxon>
        <taxon>Tracheophyta</taxon>
        <taxon>Spermatophyta</taxon>
        <taxon>Magnoliopsida</taxon>
        <taxon>eudicotyledons</taxon>
        <taxon>Gunneridae</taxon>
        <taxon>Pentapetalae</taxon>
        <taxon>asterids</taxon>
        <taxon>campanulids</taxon>
        <taxon>Apiales</taxon>
        <taxon>Apiaceae</taxon>
        <taxon>Apioideae</taxon>
        <taxon>Scandiceae</taxon>
        <taxon>Daucinae</taxon>
        <taxon>Daucus</taxon>
        <taxon>Daucus sect. Daucus</taxon>
    </lineage>
</organism>
<gene>
    <name evidence="2" type="primary">accD</name>
</gene>
<accession>Q0G9V3</accession>
<name>ACCD_DAUCA</name>
<comment type="function">
    <text evidence="2">Component of the acetyl coenzyme A carboxylase (ACC) complex. Biotin carboxylase (BC) catalyzes the carboxylation of biotin on its carrier protein (BCCP) and then the CO(2) group is transferred by the transcarboxylase to acetyl-CoA to form malonyl-CoA.</text>
</comment>
<comment type="catalytic activity">
    <reaction evidence="2">
        <text>N(6)-carboxybiotinyl-L-lysyl-[protein] + acetyl-CoA = N(6)-biotinyl-L-lysyl-[protein] + malonyl-CoA</text>
        <dbReference type="Rhea" id="RHEA:54728"/>
        <dbReference type="Rhea" id="RHEA-COMP:10505"/>
        <dbReference type="Rhea" id="RHEA-COMP:10506"/>
        <dbReference type="ChEBI" id="CHEBI:57288"/>
        <dbReference type="ChEBI" id="CHEBI:57384"/>
        <dbReference type="ChEBI" id="CHEBI:83144"/>
        <dbReference type="ChEBI" id="CHEBI:83145"/>
        <dbReference type="EC" id="2.1.3.15"/>
    </reaction>
</comment>
<comment type="cofactor">
    <cofactor evidence="2">
        <name>Zn(2+)</name>
        <dbReference type="ChEBI" id="CHEBI:29105"/>
    </cofactor>
    <text evidence="2">Binds 1 zinc ion per subunit.</text>
</comment>
<comment type="pathway">
    <text evidence="2">Lipid metabolism; malonyl-CoA biosynthesis; malonyl-CoA from acetyl-CoA: step 1/1.</text>
</comment>
<comment type="subunit">
    <text evidence="1">Acetyl-CoA carboxylase is a heterohexamer composed of biotin carboxyl carrier protein, biotin carboxylase and 2 subunits each of ACCase subunit alpha and ACCase plastid-coded subunit beta (accD).</text>
</comment>
<comment type="subcellular location">
    <subcellularLocation>
        <location evidence="2">Plastid</location>
        <location evidence="2">Chloroplast stroma</location>
    </subcellularLocation>
</comment>
<comment type="similarity">
    <text evidence="2">Belongs to the AccD/PCCB family.</text>
</comment>
<proteinExistence type="inferred from homology"/>
<protein>
    <recommendedName>
        <fullName evidence="2">Acetyl-coenzyme A carboxylase carboxyl transferase subunit beta, chloroplastic</fullName>
        <shortName evidence="2">ACCase subunit beta</shortName>
        <shortName evidence="2">Acetyl-CoA carboxylase carboxyltransferase subunit beta</shortName>
        <ecNumber evidence="2">2.1.3.15</ecNumber>
    </recommendedName>
</protein>
<sequence length="491" mass="55550">MERWWFDSILFKKGFEHRCGLSKSMGGLGPIENTSESEDPNRNDMKKNSHSWGSRDNSSYSNVDYLFGVKDIWNFISDETFLVVDRNGNSYSIYLDIEKHIFEIDSGHFFQSGLESSFYSYWNLSYLNNGSKTDDPHDDHYMDDTQYSWNNHINSYIDIYLESQIFIDTYIVSGSDNYSNSYISRSVCGESESKGSNISTSTNGSTIIESSNDLDITQKYRHLWVQCENCYGLNYKKILKSKMNLCEQCGYHLKMSSSDRIELSIDPDTWDAMDEDMVSLDPIEFHSEEEPYKDRIDSYQRKTGLTEAVQTGIGQLNGIPIALGVMDFQFMGGSMGSVVGEKITRLIEYATNQLLPLIIVCASGGARMQEGSLSLMQMAKISSALYDYQSNKKLFYVPILTSPTTGGVTASFGMLGDIIIAEPNAYIAFAGKRVIEQTLNKTVPEGSQAAEYLFQKGLFDLIVPRNLLKSVLSELFQLHAFFPLNKNSIEH</sequence>
<dbReference type="EC" id="2.1.3.15" evidence="2"/>
<dbReference type="EMBL" id="DQ898156">
    <property type="protein sequence ID" value="ABI32433.1"/>
    <property type="molecule type" value="Genomic_DNA"/>
</dbReference>
<dbReference type="RefSeq" id="YP_740126.1">
    <property type="nucleotide sequence ID" value="NC_008325.1"/>
</dbReference>
<dbReference type="SMR" id="Q0G9V3"/>
<dbReference type="GeneID" id="4266752"/>
<dbReference type="OMA" id="KYSWNNH"/>
<dbReference type="UniPathway" id="UPA00655">
    <property type="reaction ID" value="UER00711"/>
</dbReference>
<dbReference type="GO" id="GO:0009317">
    <property type="term" value="C:acetyl-CoA carboxylase complex"/>
    <property type="evidence" value="ECO:0007669"/>
    <property type="project" value="InterPro"/>
</dbReference>
<dbReference type="GO" id="GO:0009570">
    <property type="term" value="C:chloroplast stroma"/>
    <property type="evidence" value="ECO:0007669"/>
    <property type="project" value="UniProtKB-SubCell"/>
</dbReference>
<dbReference type="GO" id="GO:0003989">
    <property type="term" value="F:acetyl-CoA carboxylase activity"/>
    <property type="evidence" value="ECO:0007669"/>
    <property type="project" value="InterPro"/>
</dbReference>
<dbReference type="GO" id="GO:0005524">
    <property type="term" value="F:ATP binding"/>
    <property type="evidence" value="ECO:0007669"/>
    <property type="project" value="UniProtKB-KW"/>
</dbReference>
<dbReference type="GO" id="GO:0016743">
    <property type="term" value="F:carboxyl- or carbamoyltransferase activity"/>
    <property type="evidence" value="ECO:0007669"/>
    <property type="project" value="UniProtKB-UniRule"/>
</dbReference>
<dbReference type="GO" id="GO:0008270">
    <property type="term" value="F:zinc ion binding"/>
    <property type="evidence" value="ECO:0007669"/>
    <property type="project" value="UniProtKB-UniRule"/>
</dbReference>
<dbReference type="GO" id="GO:0006633">
    <property type="term" value="P:fatty acid biosynthetic process"/>
    <property type="evidence" value="ECO:0007669"/>
    <property type="project" value="UniProtKB-KW"/>
</dbReference>
<dbReference type="GO" id="GO:2001295">
    <property type="term" value="P:malonyl-CoA biosynthetic process"/>
    <property type="evidence" value="ECO:0007669"/>
    <property type="project" value="UniProtKB-UniRule"/>
</dbReference>
<dbReference type="Gene3D" id="3.90.226.10">
    <property type="entry name" value="2-enoyl-CoA Hydratase, Chain A, domain 1"/>
    <property type="match status" value="1"/>
</dbReference>
<dbReference type="HAMAP" id="MF_01395">
    <property type="entry name" value="AcetylCoA_CT_beta"/>
    <property type="match status" value="1"/>
</dbReference>
<dbReference type="InterPro" id="IPR034733">
    <property type="entry name" value="AcCoA_carboxyl_beta"/>
</dbReference>
<dbReference type="InterPro" id="IPR000438">
    <property type="entry name" value="Acetyl_CoA_COase_Trfase_b_su"/>
</dbReference>
<dbReference type="InterPro" id="IPR029045">
    <property type="entry name" value="ClpP/crotonase-like_dom_sf"/>
</dbReference>
<dbReference type="InterPro" id="IPR011762">
    <property type="entry name" value="COA_CT_N"/>
</dbReference>
<dbReference type="NCBIfam" id="TIGR00515">
    <property type="entry name" value="accD"/>
    <property type="match status" value="1"/>
</dbReference>
<dbReference type="PANTHER" id="PTHR42995">
    <property type="entry name" value="ACETYL-COENZYME A CARBOXYLASE CARBOXYL TRANSFERASE SUBUNIT BETA, CHLOROPLASTIC"/>
    <property type="match status" value="1"/>
</dbReference>
<dbReference type="PANTHER" id="PTHR42995:SF5">
    <property type="entry name" value="ACETYL-COENZYME A CARBOXYLASE CARBOXYL TRANSFERASE SUBUNIT BETA, CHLOROPLASTIC"/>
    <property type="match status" value="1"/>
</dbReference>
<dbReference type="Pfam" id="PF01039">
    <property type="entry name" value="Carboxyl_trans"/>
    <property type="match status" value="1"/>
</dbReference>
<dbReference type="PRINTS" id="PR01070">
    <property type="entry name" value="ACCCTRFRASEB"/>
</dbReference>
<dbReference type="SUPFAM" id="SSF52096">
    <property type="entry name" value="ClpP/crotonase"/>
    <property type="match status" value="1"/>
</dbReference>
<dbReference type="PROSITE" id="PS50980">
    <property type="entry name" value="COA_CT_NTER"/>
    <property type="match status" value="1"/>
</dbReference>
<feature type="chain" id="PRO_0000359134" description="Acetyl-coenzyme A carboxylase carboxyl transferase subunit beta, chloroplastic">
    <location>
        <begin position="1"/>
        <end position="491"/>
    </location>
</feature>
<feature type="domain" description="CoA carboxyltransferase N-terminal" evidence="3">
    <location>
        <begin position="223"/>
        <end position="491"/>
    </location>
</feature>
<feature type="zinc finger region" description="C4-type" evidence="2">
    <location>
        <begin position="227"/>
        <end position="249"/>
    </location>
</feature>
<feature type="region of interest" description="Disordered" evidence="4">
    <location>
        <begin position="28"/>
        <end position="56"/>
    </location>
</feature>
<feature type="binding site" evidence="2">
    <location>
        <position position="227"/>
    </location>
    <ligand>
        <name>Zn(2+)</name>
        <dbReference type="ChEBI" id="CHEBI:29105"/>
    </ligand>
</feature>
<feature type="binding site" evidence="2">
    <location>
        <position position="230"/>
    </location>
    <ligand>
        <name>Zn(2+)</name>
        <dbReference type="ChEBI" id="CHEBI:29105"/>
    </ligand>
</feature>
<feature type="binding site" evidence="2">
    <location>
        <position position="246"/>
    </location>
    <ligand>
        <name>Zn(2+)</name>
        <dbReference type="ChEBI" id="CHEBI:29105"/>
    </ligand>
</feature>
<feature type="binding site" evidence="2">
    <location>
        <position position="249"/>
    </location>
    <ligand>
        <name>Zn(2+)</name>
        <dbReference type="ChEBI" id="CHEBI:29105"/>
    </ligand>
</feature>
<reference key="1">
    <citation type="journal article" date="2006" name="BMC Genomics">
        <title>Complete plastid genome sequence of Daucus carota: implications for biotechnology and phylogeny of angiosperms.</title>
        <authorList>
            <person name="Ruhlman T."/>
            <person name="Lee S.-B."/>
            <person name="Jansen R.K."/>
            <person name="Hostetler J.B."/>
            <person name="Tallon L.J."/>
            <person name="Town C.D."/>
            <person name="Daniell H."/>
        </authorList>
    </citation>
    <scope>NUCLEOTIDE SEQUENCE [LARGE SCALE GENOMIC DNA]</scope>
    <source>
        <strain>cv. Danvers Half-long</strain>
    </source>
</reference>
<evidence type="ECO:0000250" key="1"/>
<evidence type="ECO:0000255" key="2">
    <source>
        <dbReference type="HAMAP-Rule" id="MF_01395"/>
    </source>
</evidence>
<evidence type="ECO:0000255" key="3">
    <source>
        <dbReference type="PROSITE-ProRule" id="PRU01136"/>
    </source>
</evidence>
<evidence type="ECO:0000256" key="4">
    <source>
        <dbReference type="SAM" id="MobiDB-lite"/>
    </source>
</evidence>
<geneLocation type="chloroplast"/>
<keyword id="KW-0067">ATP-binding</keyword>
<keyword id="KW-0150">Chloroplast</keyword>
<keyword id="KW-0275">Fatty acid biosynthesis</keyword>
<keyword id="KW-0276">Fatty acid metabolism</keyword>
<keyword id="KW-0444">Lipid biosynthesis</keyword>
<keyword id="KW-0443">Lipid metabolism</keyword>
<keyword id="KW-0479">Metal-binding</keyword>
<keyword id="KW-0547">Nucleotide-binding</keyword>
<keyword id="KW-0934">Plastid</keyword>
<keyword id="KW-0808">Transferase</keyword>
<keyword id="KW-0862">Zinc</keyword>
<keyword id="KW-0863">Zinc-finger</keyword>